<name>PVDQ_PSEPF</name>
<accession>Q3KD51</accession>
<proteinExistence type="inferred from homology"/>
<organism>
    <name type="scientific">Pseudomonas fluorescens (strain Pf0-1)</name>
    <dbReference type="NCBI Taxonomy" id="205922"/>
    <lineage>
        <taxon>Bacteria</taxon>
        <taxon>Pseudomonadati</taxon>
        <taxon>Pseudomonadota</taxon>
        <taxon>Gammaproteobacteria</taxon>
        <taxon>Pseudomonadales</taxon>
        <taxon>Pseudomonadaceae</taxon>
        <taxon>Pseudomonas</taxon>
    </lineage>
</organism>
<feature type="signal peptide" evidence="2">
    <location>
        <begin position="1"/>
        <end position="25"/>
    </location>
</feature>
<feature type="chain" id="PRO_0000253361" description="Acyl-homoserine lactone acylase PvdQ">
    <location>
        <begin position="26"/>
        <end position="778"/>
    </location>
</feature>
<feature type="chain" id="PRO_0000253362" description="Acyl-homoserine lactone acylase PvdQ subunit alpha">
    <location>
        <begin position="26"/>
        <end position="195" status="uncertain"/>
    </location>
</feature>
<feature type="propeptide" id="PRO_0000253363" description="Spacer peptide" evidence="1">
    <location>
        <begin position="196" status="uncertain"/>
        <end position="218"/>
    </location>
</feature>
<feature type="chain" id="PRO_0000253364" description="Acyl-homoserine lactone acylase PvdQ subunit beta">
    <location>
        <begin position="219"/>
        <end position="778"/>
    </location>
</feature>
<feature type="active site" description="Nucleophile" evidence="1">
    <location>
        <position position="219"/>
    </location>
</feature>
<dbReference type="EC" id="3.5.1.97"/>
<dbReference type="EMBL" id="CP000094">
    <property type="protein sequence ID" value="ABA74304.1"/>
    <property type="molecule type" value="Genomic_DNA"/>
</dbReference>
<dbReference type="RefSeq" id="WP_011333981.1">
    <property type="nucleotide sequence ID" value="NC_007492.2"/>
</dbReference>
<dbReference type="SMR" id="Q3KD51"/>
<dbReference type="MEROPS" id="S45.004"/>
<dbReference type="KEGG" id="pfo:Pfl01_2563"/>
<dbReference type="eggNOG" id="COG2366">
    <property type="taxonomic scope" value="Bacteria"/>
</dbReference>
<dbReference type="HOGENOM" id="CLU_017615_0_0_6"/>
<dbReference type="Proteomes" id="UP000002704">
    <property type="component" value="Chromosome"/>
</dbReference>
<dbReference type="GO" id="GO:0042597">
    <property type="term" value="C:periplasmic space"/>
    <property type="evidence" value="ECO:0007669"/>
    <property type="project" value="UniProtKB-SubCell"/>
</dbReference>
<dbReference type="GO" id="GO:0016811">
    <property type="term" value="F:hydrolase activity, acting on carbon-nitrogen (but not peptide) bonds, in linear amides"/>
    <property type="evidence" value="ECO:0007669"/>
    <property type="project" value="InterPro"/>
</dbReference>
<dbReference type="GO" id="GO:0017000">
    <property type="term" value="P:antibiotic biosynthetic process"/>
    <property type="evidence" value="ECO:0007669"/>
    <property type="project" value="InterPro"/>
</dbReference>
<dbReference type="GO" id="GO:0009372">
    <property type="term" value="P:quorum sensing"/>
    <property type="evidence" value="ECO:0007669"/>
    <property type="project" value="UniProtKB-KW"/>
</dbReference>
<dbReference type="CDD" id="cd01936">
    <property type="entry name" value="Ntn_CA"/>
    <property type="match status" value="1"/>
</dbReference>
<dbReference type="Gene3D" id="1.10.1400.10">
    <property type="match status" value="1"/>
</dbReference>
<dbReference type="Gene3D" id="2.30.120.10">
    <property type="match status" value="1"/>
</dbReference>
<dbReference type="Gene3D" id="3.60.20.10">
    <property type="entry name" value="Glutamine Phosphoribosylpyrophosphate, subunit 1, domain 1"/>
    <property type="match status" value="1"/>
</dbReference>
<dbReference type="Gene3D" id="1.10.439.10">
    <property type="entry name" value="Penicillin Amidohydrolase, domain 1"/>
    <property type="match status" value="1"/>
</dbReference>
<dbReference type="InterPro" id="IPR029055">
    <property type="entry name" value="Ntn_hydrolases_N"/>
</dbReference>
<dbReference type="InterPro" id="IPR014395">
    <property type="entry name" value="Pen/GL7ACA/AHL_acylase"/>
</dbReference>
<dbReference type="InterPro" id="IPR043147">
    <property type="entry name" value="Penicillin_amidase_A-knob"/>
</dbReference>
<dbReference type="InterPro" id="IPR023343">
    <property type="entry name" value="Penicillin_amidase_dom1"/>
</dbReference>
<dbReference type="InterPro" id="IPR043146">
    <property type="entry name" value="Penicillin_amidase_N_B-knob"/>
</dbReference>
<dbReference type="InterPro" id="IPR002692">
    <property type="entry name" value="S45"/>
</dbReference>
<dbReference type="PANTHER" id="PTHR34218:SF3">
    <property type="entry name" value="ACYL-HOMOSERINE LACTONE ACYLASE PVDQ"/>
    <property type="match status" value="1"/>
</dbReference>
<dbReference type="PANTHER" id="PTHR34218">
    <property type="entry name" value="PEPTIDASE S45 PENICILLIN AMIDASE"/>
    <property type="match status" value="1"/>
</dbReference>
<dbReference type="Pfam" id="PF01804">
    <property type="entry name" value="Penicil_amidase"/>
    <property type="match status" value="1"/>
</dbReference>
<dbReference type="PIRSF" id="PIRSF001227">
    <property type="entry name" value="Pen_acylase"/>
    <property type="match status" value="1"/>
</dbReference>
<dbReference type="SUPFAM" id="SSF56235">
    <property type="entry name" value="N-terminal nucleophile aminohydrolases (Ntn hydrolases)"/>
    <property type="match status" value="1"/>
</dbReference>
<reference key="1">
    <citation type="journal article" date="2009" name="Genome Biol.">
        <title>Genomic and genetic analyses of diversity and plant interactions of Pseudomonas fluorescens.</title>
        <authorList>
            <person name="Silby M.W."/>
            <person name="Cerdeno-Tarraga A.M."/>
            <person name="Vernikos G.S."/>
            <person name="Giddens S.R."/>
            <person name="Jackson R.W."/>
            <person name="Preston G.M."/>
            <person name="Zhang X.-X."/>
            <person name="Moon C.D."/>
            <person name="Gehrig S.M."/>
            <person name="Godfrey S.A.C."/>
            <person name="Knight C.G."/>
            <person name="Malone J.G."/>
            <person name="Robinson Z."/>
            <person name="Spiers A.J."/>
            <person name="Harris S."/>
            <person name="Challis G.L."/>
            <person name="Yaxley A.M."/>
            <person name="Harris D."/>
            <person name="Seeger K."/>
            <person name="Murphy L."/>
            <person name="Rutter S."/>
            <person name="Squares R."/>
            <person name="Quail M.A."/>
            <person name="Saunders E."/>
            <person name="Mavromatis K."/>
            <person name="Brettin T.S."/>
            <person name="Bentley S.D."/>
            <person name="Hothersall J."/>
            <person name="Stephens E."/>
            <person name="Thomas C.M."/>
            <person name="Parkhill J."/>
            <person name="Levy S.B."/>
            <person name="Rainey P.B."/>
            <person name="Thomson N.R."/>
        </authorList>
    </citation>
    <scope>NUCLEOTIDE SEQUENCE [LARGE SCALE GENOMIC DNA]</scope>
    <source>
        <strain>Pf0-1</strain>
    </source>
</reference>
<sequence>MTISRQFTGLTLAGLFLGLSLSAQAFSPSVQTGADIRRTGFGVPHIRAENERGLGFGIGYAYAQDNLCLLANEIVTVNGERSRYFGPEQLTVEERENRISDVFFQWLNTPQAVNAFWQAQPAEVRDLVEGYAAGYNRYLAERRQQGLPQQCQGEWVRDIAAEDLVKLTRRLLVEGGVGQFAEALASATPPQAMANIENNARAYQLADTRLQRFALDRGSNAVAVGSERSFNGRGMLLANPHFPWVGGMRFYQMHLTIPGKLDVMGAALPGLPMINIGFNQHLAWTHTVDSSKHFTLYRLQLDPKDPTRYLLDGQSLPLSKQTVTVQVKQTDGQVVPVSRDVYSSQFGPIVQWPGKLDWNNQFAYSLRDANLDNDRVLKQWYAMNRAGNLKDLQDSVHTIQGIPWVNTLAVDDKGQTLYMNLSVVPNVSTDKLARCSDPRAGLKMIVLDGSNSACAWDIDPHAAQKGIYASSQLPQLLRKDFVQHSNDSAWLANPAQPLTGFSPLISQDGQPLGLRSRFALDRLATLSKKGLVSVQDLQHMVMDDQVFLATQVVPDLLKFCTSQSEAALKSVCSSLKAWDGRANLESGVGLVHFQSIMQAMQESPQAWRVAFDPKDAQHTPRGLAIEKPEVAKALREAMLASAEIAAKMGLTEKTRWGDVQVVSSGGQQTPIHGGPGTLGIYNAIQSVPREDGKLEVVSGTSYLQVVTFDDKGPHAQGLLAFSLSSDPASKYSRDQTEAFSKKQWSVLPFTEQQIKADPQYQVQTVRDDLEKTGKVAAQ</sequence>
<protein>
    <recommendedName>
        <fullName>Acyl-homoserine lactone acylase PvdQ</fullName>
        <shortName>AHL acylase PvdQ</shortName>
        <shortName>Acyl-HSL acylase PvdQ</shortName>
        <ecNumber>3.5.1.97</ecNumber>
    </recommendedName>
    <component>
        <recommendedName>
            <fullName>Acyl-homoserine lactone acylase PvdQ subunit alpha</fullName>
            <shortName>Acyl-HSL acylase PvdQ subunit alpha</shortName>
        </recommendedName>
    </component>
    <component>
        <recommendedName>
            <fullName>Acyl-homoserine lactone acylase PvdQ subunit beta</fullName>
            <shortName>Acyl-HSL acylase PvdQ subunit beta</shortName>
        </recommendedName>
    </component>
</protein>
<comment type="function">
    <text evidence="1">Catalyzes the deacylation of acyl-homoserine lactone (AHL or acyl-HSL), releasing homoserine lactone (HSL) and the corresponding fatty acid. Possesses a specificity for the degradation of long-chain acyl-HSLs (side chains of 11 to 14 carbons in length) (By similarity).</text>
</comment>
<comment type="catalytic activity">
    <reaction>
        <text>an N-acyl-L-homoserine lactone + H2O = L-homoserine lactone + a carboxylate</text>
        <dbReference type="Rhea" id="RHEA:18937"/>
        <dbReference type="ChEBI" id="CHEBI:15377"/>
        <dbReference type="ChEBI" id="CHEBI:29067"/>
        <dbReference type="ChEBI" id="CHEBI:55474"/>
        <dbReference type="ChEBI" id="CHEBI:58633"/>
        <dbReference type="EC" id="3.5.1.97"/>
    </reaction>
</comment>
<comment type="subunit">
    <text evidence="1">Heterodimer of an alpha subunit and a beta subunit processed from the same precursor.</text>
</comment>
<comment type="subcellular location">
    <subcellularLocation>
        <location evidence="1">Periplasm</location>
    </subcellularLocation>
</comment>
<comment type="miscellaneous">
    <text>AHL-mediated signaling mediates quorum sensing in many species of Proteobacteria, regulating hundreds of genes, including many that code for extracellular virulence factors.</text>
</comment>
<comment type="similarity">
    <text evidence="3">Belongs to the peptidase S45 family.</text>
</comment>
<keyword id="KW-0378">Hydrolase</keyword>
<keyword id="KW-0574">Periplasm</keyword>
<keyword id="KW-0673">Quorum sensing</keyword>
<keyword id="KW-0732">Signal</keyword>
<keyword id="KW-0865">Zymogen</keyword>
<gene>
    <name type="primary">pvdQ</name>
    <name type="ordered locus">Pfl01_2563</name>
</gene>
<evidence type="ECO:0000250" key="1"/>
<evidence type="ECO:0000255" key="2"/>
<evidence type="ECO:0000305" key="3"/>